<proteinExistence type="evidence at protein level"/>
<organism>
    <name type="scientific">Homo sapiens</name>
    <name type="common">Human</name>
    <dbReference type="NCBI Taxonomy" id="9606"/>
    <lineage>
        <taxon>Eukaryota</taxon>
        <taxon>Metazoa</taxon>
        <taxon>Chordata</taxon>
        <taxon>Craniata</taxon>
        <taxon>Vertebrata</taxon>
        <taxon>Euteleostomi</taxon>
        <taxon>Mammalia</taxon>
        <taxon>Eutheria</taxon>
        <taxon>Euarchontoglires</taxon>
        <taxon>Primates</taxon>
        <taxon>Haplorrhini</taxon>
        <taxon>Catarrhini</taxon>
        <taxon>Hominidae</taxon>
        <taxon>Homo</taxon>
    </lineage>
</organism>
<comment type="function">
    <text evidence="1">Cardiac- and muscle-specific transcription factor. May act to regulate the expression of genes involved in the development of myotubes. Plays a critical role in ventricular cardiomyocyte expansion and regulates postnatal skeletal muscle growth and regeneration. Involved in the organized assembly of thick and thin filaments of myofibril sarcomeres (By similarity).</text>
</comment>
<comment type="subunit">
    <text evidence="1">Interacts (via PXLXP motif) with the muscle-restricted histone methyltransferase SMYD1 (via MYND-type zinc finger).</text>
</comment>
<comment type="subcellular location">
    <subcellularLocation>
        <location evidence="1">Cytoplasm</location>
    </subcellularLocation>
    <subcellularLocation>
        <location evidence="1">Nucleus</location>
    </subcellularLocation>
</comment>
<comment type="alternative products">
    <event type="alternative splicing"/>
    <isoform>
        <id>E9PAV3-1</id>
        <name>skNAC</name>
        <sequence type="displayed"/>
    </isoform>
    <isoform>
        <id>Q13765-1</id>
        <name>1</name>
        <sequence type="external"/>
    </isoform>
    <isoform>
        <id>E9PAV3-2</id>
        <name>skNAC-2</name>
        <name>2</name>
        <sequence type="described" ref="VSP_053722 VSP_053723"/>
    </isoform>
</comment>
<comment type="domain">
    <text evidence="5">The proline-rich muscle-specific exon 3 contains eighteen approximate 23-AA repeats.</text>
</comment>
<gene>
    <name type="primary">NACA</name>
</gene>
<dbReference type="EMBL" id="AK096699">
    <property type="status" value="NOT_ANNOTATED_CDS"/>
    <property type="molecule type" value="mRNA"/>
</dbReference>
<dbReference type="EMBL" id="AC117378">
    <property type="status" value="NOT_ANNOTATED_CDS"/>
    <property type="molecule type" value="Genomic_DNA"/>
</dbReference>
<dbReference type="CCDS" id="CCDS44925.2">
    <molecule id="E9PAV3-2"/>
</dbReference>
<dbReference type="CCDS" id="CCDS91708.1">
    <molecule id="E9PAV3-1"/>
</dbReference>
<dbReference type="RefSeq" id="NP_001106674.2">
    <molecule id="E9PAV3-2"/>
    <property type="nucleotide sequence ID" value="NM_001113203.3"/>
</dbReference>
<dbReference type="RefSeq" id="NP_001352825.1">
    <molecule id="E9PAV3-1"/>
    <property type="nucleotide sequence ID" value="NM_001365896.1"/>
</dbReference>
<dbReference type="RefSeq" id="XP_011536691.1">
    <property type="nucleotide sequence ID" value="XM_011538389.1"/>
</dbReference>
<dbReference type="SMR" id="E9PAV3"/>
<dbReference type="BioGRID" id="110748">
    <property type="interactions" value="239"/>
</dbReference>
<dbReference type="FunCoup" id="E9PAV3">
    <property type="interactions" value="322"/>
</dbReference>
<dbReference type="IntAct" id="E9PAV3">
    <property type="interactions" value="39"/>
</dbReference>
<dbReference type="GlyGen" id="E9PAV3">
    <property type="glycosylation" value="60 sites, 1 O-linked glycan (9 sites)"/>
</dbReference>
<dbReference type="iPTMnet" id="E9PAV3"/>
<dbReference type="MetOSite" id="E9PAV3"/>
<dbReference type="PhosphoSitePlus" id="E9PAV3"/>
<dbReference type="SwissPalm" id="E9PAV3"/>
<dbReference type="BioMuta" id="NACA"/>
<dbReference type="jPOST" id="E9PAV3"/>
<dbReference type="MassIVE" id="E9PAV3"/>
<dbReference type="ProteomicsDB" id="19086">
    <molecule id="E9PAV3-1"/>
</dbReference>
<dbReference type="Pumba" id="E9PAV3"/>
<dbReference type="Antibodypedia" id="28384">
    <property type="antibodies" value="96 antibodies from 17 providers"/>
</dbReference>
<dbReference type="Ensembl" id="ENST00000454682.6">
    <molecule id="E9PAV3-1"/>
    <property type="protein sequence ID" value="ENSP00000403817.1"/>
    <property type="gene ID" value="ENSG00000196531.14"/>
</dbReference>
<dbReference type="Ensembl" id="ENST00000550952.6">
    <molecule id="E9PAV3-2"/>
    <property type="protein sequence ID" value="ENSP00000448035.1"/>
    <property type="gene ID" value="ENSG00000196531.14"/>
</dbReference>
<dbReference type="GeneID" id="4666"/>
<dbReference type="MANE-Select" id="ENST00000454682.6">
    <property type="protein sequence ID" value="ENSP00000403817.1"/>
    <property type="RefSeq nucleotide sequence ID" value="NM_001365896.1"/>
    <property type="RefSeq protein sequence ID" value="NP_001352825.1"/>
</dbReference>
<dbReference type="UCSC" id="uc001sma.3">
    <molecule id="E9PAV3-1"/>
    <property type="organism name" value="human"/>
</dbReference>
<dbReference type="AGR" id="HGNC:7629"/>
<dbReference type="GeneCards" id="NACA"/>
<dbReference type="HGNC" id="HGNC:7629">
    <property type="gene designation" value="NACA"/>
</dbReference>
<dbReference type="HPA" id="ENSG00000196531">
    <property type="expression patterns" value="Low tissue specificity"/>
</dbReference>
<dbReference type="neXtProt" id="NX_E9PAV3"/>
<dbReference type="OpenTargets" id="ENSG00000196531"/>
<dbReference type="VEuPathDB" id="HostDB:ENSG00000196531"/>
<dbReference type="eggNOG" id="KOG2239">
    <property type="taxonomic scope" value="Eukaryota"/>
</dbReference>
<dbReference type="GeneTree" id="ENSGT00440000033468"/>
<dbReference type="HOGENOM" id="CLU_237256_0_0_1"/>
<dbReference type="InParanoid" id="E9PAV3"/>
<dbReference type="OMA" id="PHKGAPT"/>
<dbReference type="OrthoDB" id="3169036at2759"/>
<dbReference type="PAN-GO" id="E9PAV3">
    <property type="GO annotations" value="3 GO annotations based on evolutionary models"/>
</dbReference>
<dbReference type="PhylomeDB" id="E9PAV3"/>
<dbReference type="PathwayCommons" id="E9PAV3"/>
<dbReference type="SignaLink" id="E9PAV3"/>
<dbReference type="SIGNOR" id="E9PAV3"/>
<dbReference type="BioGRID-ORCS" id="4666">
    <property type="hits" value="543 hits in 1157 CRISPR screens"/>
</dbReference>
<dbReference type="ChiTaRS" id="NACA">
    <property type="organism name" value="human"/>
</dbReference>
<dbReference type="GenomeRNAi" id="4666"/>
<dbReference type="Pharos" id="E9PAV3">
    <property type="development level" value="Tbio"/>
</dbReference>
<dbReference type="Proteomes" id="UP000005640">
    <property type="component" value="Chromosome 12"/>
</dbReference>
<dbReference type="RNAct" id="E9PAV3">
    <property type="molecule type" value="protein"/>
</dbReference>
<dbReference type="Bgee" id="ENSG00000196531">
    <property type="expression patterns" value="Expressed in tendon of biceps brachii and 211 other cell types or tissues"/>
</dbReference>
<dbReference type="ExpressionAtlas" id="E9PAV3">
    <property type="expression patterns" value="baseline and differential"/>
</dbReference>
<dbReference type="GO" id="GO:0005737">
    <property type="term" value="C:cytoplasm"/>
    <property type="evidence" value="ECO:0000318"/>
    <property type="project" value="GO_Central"/>
</dbReference>
<dbReference type="GO" id="GO:0005854">
    <property type="term" value="C:nascent polypeptide-associated complex"/>
    <property type="evidence" value="ECO:0007669"/>
    <property type="project" value="InterPro"/>
</dbReference>
<dbReference type="GO" id="GO:0005634">
    <property type="term" value="C:nucleus"/>
    <property type="evidence" value="ECO:0007669"/>
    <property type="project" value="UniProtKB-SubCell"/>
</dbReference>
<dbReference type="GO" id="GO:0003677">
    <property type="term" value="F:DNA binding"/>
    <property type="evidence" value="ECO:0007669"/>
    <property type="project" value="UniProtKB-KW"/>
</dbReference>
<dbReference type="GO" id="GO:0051082">
    <property type="term" value="F:unfolded protein binding"/>
    <property type="evidence" value="ECO:0000318"/>
    <property type="project" value="GO_Central"/>
</dbReference>
<dbReference type="GO" id="GO:0006612">
    <property type="term" value="P:protein targeting to membrane"/>
    <property type="evidence" value="ECO:0000318"/>
    <property type="project" value="GO_Central"/>
</dbReference>
<dbReference type="CDD" id="cd22054">
    <property type="entry name" value="NAC_NACA"/>
    <property type="match status" value="1"/>
</dbReference>
<dbReference type="CDD" id="cd14415">
    <property type="entry name" value="UBA_NACA_NACP1"/>
    <property type="match status" value="1"/>
</dbReference>
<dbReference type="FunFam" id="2.20.70.30:FF:000002">
    <property type="entry name" value="Nascent polypeptide-associated complex (NAC), alpha subunit"/>
    <property type="match status" value="1"/>
</dbReference>
<dbReference type="FunFam" id="1.10.8.10:FF:000006">
    <property type="entry name" value="Putative nascent polypeptide-associated complex subunit alpha"/>
    <property type="match status" value="1"/>
</dbReference>
<dbReference type="Gene3D" id="1.10.8.10">
    <property type="entry name" value="DNA helicase RuvA subunit, C-terminal domain"/>
    <property type="match status" value="1"/>
</dbReference>
<dbReference type="Gene3D" id="2.20.70.30">
    <property type="entry name" value="Nascent polypeptide-associated complex domain"/>
    <property type="match status" value="1"/>
</dbReference>
<dbReference type="InterPro" id="IPR016641">
    <property type="entry name" value="EGD2/NACA0like"/>
</dbReference>
<dbReference type="InterPro" id="IPR044034">
    <property type="entry name" value="NAC-like_UBA"/>
</dbReference>
<dbReference type="InterPro" id="IPR038187">
    <property type="entry name" value="NAC_A/B_dom_sf"/>
</dbReference>
<dbReference type="InterPro" id="IPR002715">
    <property type="entry name" value="Nas_poly-pep-assoc_cplx_dom"/>
</dbReference>
<dbReference type="PANTHER" id="PTHR21713">
    <property type="entry name" value="NASCENT POLYPEPTIDE ASSOCIATED COMPLEX ALPHA SUBUNIT-RELATED"/>
    <property type="match status" value="1"/>
</dbReference>
<dbReference type="Pfam" id="PF01849">
    <property type="entry name" value="NAC"/>
    <property type="match status" value="1"/>
</dbReference>
<dbReference type="Pfam" id="PF19026">
    <property type="entry name" value="UBA_HYPK"/>
    <property type="match status" value="1"/>
</dbReference>
<dbReference type="SMART" id="SM01407">
    <property type="entry name" value="NAC"/>
    <property type="match status" value="1"/>
</dbReference>
<dbReference type="PROSITE" id="PS51151">
    <property type="entry name" value="NAC_AB"/>
    <property type="match status" value="1"/>
</dbReference>
<keyword id="KW-0007">Acetylation</keyword>
<keyword id="KW-0010">Activator</keyword>
<keyword id="KW-0025">Alternative splicing</keyword>
<keyword id="KW-0963">Cytoplasm</keyword>
<keyword id="KW-0238">DNA-binding</keyword>
<keyword id="KW-1017">Isopeptide bond</keyword>
<keyword id="KW-0539">Nucleus</keyword>
<keyword id="KW-0597">Phosphoprotein</keyword>
<keyword id="KW-1267">Proteomics identification</keyword>
<keyword id="KW-1185">Reference proteome</keyword>
<keyword id="KW-0677">Repeat</keyword>
<keyword id="KW-0804">Transcription</keyword>
<keyword id="KW-0805">Transcription regulation</keyword>
<keyword id="KW-0832">Ubl conjugation</keyword>
<feature type="chain" id="PRO_0000425571" description="Nascent polypeptide-associated complex subunit alpha, muscle-specific form">
    <location>
        <begin position="1"/>
        <end position="2078"/>
    </location>
</feature>
<feature type="domain" description="NAC-A/B" evidence="2">
    <location>
        <begin position="1933"/>
        <end position="1998"/>
    </location>
</feature>
<feature type="domain" description="UBA">
    <location>
        <begin position="2039"/>
        <end position="2078"/>
    </location>
</feature>
<feature type="region of interest" description="Disordered" evidence="3">
    <location>
        <begin position="1"/>
        <end position="21"/>
    </location>
</feature>
<feature type="region of interest" description="Disordered" evidence="3">
    <location>
        <begin position="37"/>
        <end position="96"/>
    </location>
</feature>
<feature type="region of interest" description="Disordered" evidence="3">
    <location>
        <begin position="595"/>
        <end position="614"/>
    </location>
</feature>
<feature type="region of interest" description="Disordered" evidence="3">
    <location>
        <begin position="732"/>
        <end position="1944"/>
    </location>
</feature>
<feature type="region of interest" description="Required for DNA-binding" evidence="1">
    <location>
        <begin position="1932"/>
        <end position="1943"/>
    </location>
</feature>
<feature type="short sequence motif" description="PXLXP" evidence="1">
    <location>
        <begin position="1841"/>
        <end position="1845"/>
    </location>
</feature>
<feature type="compositionally biased region" description="Polar residues" evidence="3">
    <location>
        <begin position="9"/>
        <end position="21"/>
    </location>
</feature>
<feature type="compositionally biased region" description="Polar residues" evidence="3">
    <location>
        <begin position="60"/>
        <end position="75"/>
    </location>
</feature>
<feature type="compositionally biased region" description="Low complexity" evidence="3">
    <location>
        <begin position="775"/>
        <end position="786"/>
    </location>
</feature>
<feature type="compositionally biased region" description="Polar residues" evidence="3">
    <location>
        <begin position="837"/>
        <end position="847"/>
    </location>
</feature>
<feature type="compositionally biased region" description="Pro residues" evidence="3">
    <location>
        <begin position="933"/>
        <end position="1020"/>
    </location>
</feature>
<feature type="compositionally biased region" description="Low complexity" evidence="3">
    <location>
        <begin position="1045"/>
        <end position="1067"/>
    </location>
</feature>
<feature type="compositionally biased region" description="Pro residues" evidence="3">
    <location>
        <begin position="1080"/>
        <end position="1113"/>
    </location>
</feature>
<feature type="compositionally biased region" description="Low complexity" evidence="3">
    <location>
        <begin position="1114"/>
        <end position="1130"/>
    </location>
</feature>
<feature type="compositionally biased region" description="Pro residues" evidence="3">
    <location>
        <begin position="1131"/>
        <end position="1147"/>
    </location>
</feature>
<feature type="compositionally biased region" description="Pro residues" evidence="3">
    <location>
        <begin position="1154"/>
        <end position="1170"/>
    </location>
</feature>
<feature type="compositionally biased region" description="Low complexity" evidence="3">
    <location>
        <begin position="1183"/>
        <end position="1199"/>
    </location>
</feature>
<feature type="compositionally biased region" description="Low complexity" evidence="3">
    <location>
        <begin position="1206"/>
        <end position="1222"/>
    </location>
</feature>
<feature type="compositionally biased region" description="Low complexity" evidence="3">
    <location>
        <begin position="1229"/>
        <end position="1245"/>
    </location>
</feature>
<feature type="compositionally biased region" description="Pro residues" evidence="3">
    <location>
        <begin position="1246"/>
        <end position="1270"/>
    </location>
</feature>
<feature type="compositionally biased region" description="Pro residues" evidence="3">
    <location>
        <begin position="1292"/>
        <end position="1344"/>
    </location>
</feature>
<feature type="compositionally biased region" description="Low complexity" evidence="3">
    <location>
        <begin position="1345"/>
        <end position="1366"/>
    </location>
</feature>
<feature type="compositionally biased region" description="Pro residues" evidence="3">
    <location>
        <begin position="1470"/>
        <end position="1481"/>
    </location>
</feature>
<feature type="compositionally biased region" description="Low complexity" evidence="3">
    <location>
        <begin position="1485"/>
        <end position="1507"/>
    </location>
</feature>
<feature type="compositionally biased region" description="Pro residues" evidence="3">
    <location>
        <begin position="1611"/>
        <end position="1625"/>
    </location>
</feature>
<feature type="compositionally biased region" description="Low complexity" evidence="3">
    <location>
        <begin position="1626"/>
        <end position="1637"/>
    </location>
</feature>
<feature type="compositionally biased region" description="Polar residues" evidence="3">
    <location>
        <begin position="1647"/>
        <end position="1656"/>
    </location>
</feature>
<feature type="compositionally biased region" description="Basic and acidic residues" evidence="3">
    <location>
        <begin position="1744"/>
        <end position="1756"/>
    </location>
</feature>
<feature type="compositionally biased region" description="Pro residues" evidence="3">
    <location>
        <begin position="1794"/>
        <end position="1811"/>
    </location>
</feature>
<feature type="compositionally biased region" description="Polar residues" evidence="3">
    <location>
        <begin position="1876"/>
        <end position="1891"/>
    </location>
</feature>
<feature type="compositionally biased region" description="Acidic residues" evidence="3">
    <location>
        <begin position="1892"/>
        <end position="1905"/>
    </location>
</feature>
<feature type="compositionally biased region" description="Low complexity" evidence="3">
    <location>
        <begin position="1907"/>
        <end position="1920"/>
    </location>
</feature>
<feature type="modified residue" description="Phosphoserine" evidence="1">
    <location>
        <position position="917"/>
    </location>
</feature>
<feature type="modified residue" description="Phosphoserine" evidence="1">
    <location>
        <position position="1181"/>
    </location>
</feature>
<feature type="modified residue" description="Phosphoserine" evidence="1">
    <location>
        <position position="1397"/>
    </location>
</feature>
<feature type="modified residue" description="Phosphoserine" evidence="1">
    <location>
        <position position="1474"/>
    </location>
</feature>
<feature type="modified residue" description="Phosphoserine; by ILK1" evidence="1">
    <location>
        <position position="1906"/>
    </location>
</feature>
<feature type="modified residue" description="Phosphoserine" evidence="15">
    <location>
        <position position="1995"/>
    </location>
</feature>
<feature type="modified residue" description="N6-acetyllysine; alternate" evidence="11">
    <location>
        <position position="2005"/>
    </location>
</feature>
<feature type="modified residue" description="Phosphothreonine; by GSK3-beta" evidence="1">
    <location>
        <position position="2022"/>
    </location>
</feature>
<feature type="modified residue" description="Phosphothreonine" evidence="9">
    <location>
        <position position="2024"/>
    </location>
</feature>
<feature type="modified residue" description="Phosphoserine" evidence="9 10 12 14">
    <location>
        <position position="2029"/>
    </location>
</feature>
<feature type="modified residue" description="Phosphoserine" evidence="8 13">
    <location>
        <position position="2049"/>
    </location>
</feature>
<feature type="modified residue" description="Phosphoserine" evidence="9 13">
    <location>
        <position position="2054"/>
    </location>
</feature>
<feature type="modified residue" description="Phosphoserine" evidence="13">
    <location>
        <position position="2066"/>
    </location>
</feature>
<feature type="cross-link" description="Glycyl lysine isopeptide (Lys-Gly) (interchain with G-Cter in SUMO2); alternate" evidence="16">
    <location>
        <position position="2005"/>
    </location>
</feature>
<feature type="splice variant" id="VSP_053722" description="In isoform skNAC-2." evidence="6">
    <location>
        <begin position="602"/>
        <end position="644"/>
    </location>
</feature>
<feature type="splice variant" id="VSP_053723" description="In isoform skNAC-2." evidence="6">
    <location>
        <begin position="665"/>
        <end position="1774"/>
    </location>
</feature>
<feature type="sequence variant" id="VAR_070547" description="In dbSNP:rs2958127." evidence="4">
    <original>V</original>
    <variation>E</variation>
    <location>
        <position position="336"/>
    </location>
</feature>
<feature type="sequence variant" id="VAR_070548" description="In dbSNP:rs2926743." evidence="4">
    <original>F</original>
    <variation>S</variation>
    <location>
        <position position="405"/>
    </location>
</feature>
<feature type="sequence variant" id="VAR_070549" description="In dbSNP:rs185561121." evidence="4">
    <original>P</original>
    <variation>S</variation>
    <location>
        <position position="519"/>
    </location>
</feature>
<feature type="sequence variant" id="VAR_070550" description="In dbSNP:rs2926747." evidence="4">
    <original>S</original>
    <variation>T</variation>
    <location>
        <position position="1795"/>
    </location>
</feature>
<feature type="sequence variant" id="VAR_070551" description="In dbSNP:rs2958149." evidence="4">
    <original>L</original>
    <variation>P</variation>
    <location>
        <position position="1841"/>
    </location>
</feature>
<feature type="sequence conflict" description="In Ref. 1; AK096699." evidence="7" ref="1">
    <original>S</original>
    <variation>N</variation>
    <location>
        <position position="417"/>
    </location>
</feature>
<evidence type="ECO:0000250" key="1">
    <source>
        <dbReference type="UniProtKB" id="P70670"/>
    </source>
</evidence>
<evidence type="ECO:0000255" key="2">
    <source>
        <dbReference type="PROSITE-ProRule" id="PRU00507"/>
    </source>
</evidence>
<evidence type="ECO:0000256" key="3">
    <source>
        <dbReference type="SAM" id="MobiDB-lite"/>
    </source>
</evidence>
<evidence type="ECO:0000269" key="4">
    <source>
    </source>
</evidence>
<evidence type="ECO:0000269" key="5">
    <source>
    </source>
</evidence>
<evidence type="ECO:0000303" key="6">
    <source>
    </source>
</evidence>
<evidence type="ECO:0000305" key="7"/>
<evidence type="ECO:0007744" key="8">
    <source>
    </source>
</evidence>
<evidence type="ECO:0007744" key="9">
    <source>
    </source>
</evidence>
<evidence type="ECO:0007744" key="10">
    <source>
    </source>
</evidence>
<evidence type="ECO:0007744" key="11">
    <source>
    </source>
</evidence>
<evidence type="ECO:0007744" key="12">
    <source>
    </source>
</evidence>
<evidence type="ECO:0007744" key="13">
    <source>
    </source>
</evidence>
<evidence type="ECO:0007744" key="14">
    <source>
    </source>
</evidence>
<evidence type="ECO:0007744" key="15">
    <source>
    </source>
</evidence>
<evidence type="ECO:0007744" key="16">
    <source>
    </source>
</evidence>
<protein>
    <recommendedName>
        <fullName>Nascent polypeptide-associated complex subunit alpha, muscle-specific form</fullName>
    </recommendedName>
    <alternativeName>
        <fullName>Alpha-NAC, muscle-specific form</fullName>
        <shortName>skNAC</shortName>
    </alternativeName>
</protein>
<reference key="1">
    <citation type="journal article" date="2004" name="Nat. Genet.">
        <title>Complete sequencing and characterization of 21,243 full-length human cDNAs.</title>
        <authorList>
            <person name="Ota T."/>
            <person name="Suzuki Y."/>
            <person name="Nishikawa T."/>
            <person name="Otsuki T."/>
            <person name="Sugiyama T."/>
            <person name="Irie R."/>
            <person name="Wakamatsu A."/>
            <person name="Hayashi K."/>
            <person name="Sato H."/>
            <person name="Nagai K."/>
            <person name="Kimura K."/>
            <person name="Makita H."/>
            <person name="Sekine M."/>
            <person name="Obayashi M."/>
            <person name="Nishi T."/>
            <person name="Shibahara T."/>
            <person name="Tanaka T."/>
            <person name="Ishii S."/>
            <person name="Yamamoto J."/>
            <person name="Saito K."/>
            <person name="Kawai Y."/>
            <person name="Isono Y."/>
            <person name="Nakamura Y."/>
            <person name="Nagahari K."/>
            <person name="Murakami K."/>
            <person name="Yasuda T."/>
            <person name="Iwayanagi T."/>
            <person name="Wagatsuma M."/>
            <person name="Shiratori A."/>
            <person name="Sudo H."/>
            <person name="Hosoiri T."/>
            <person name="Kaku Y."/>
            <person name="Kodaira H."/>
            <person name="Kondo H."/>
            <person name="Sugawara M."/>
            <person name="Takahashi M."/>
            <person name="Kanda K."/>
            <person name="Yokoi T."/>
            <person name="Furuya T."/>
            <person name="Kikkawa E."/>
            <person name="Omura Y."/>
            <person name="Abe K."/>
            <person name="Kamihara K."/>
            <person name="Katsuta N."/>
            <person name="Sato K."/>
            <person name="Tanikawa M."/>
            <person name="Yamazaki M."/>
            <person name="Ninomiya K."/>
            <person name="Ishibashi T."/>
            <person name="Yamashita H."/>
            <person name="Murakawa K."/>
            <person name="Fujimori K."/>
            <person name="Tanai H."/>
            <person name="Kimata M."/>
            <person name="Watanabe M."/>
            <person name="Hiraoka S."/>
            <person name="Chiba Y."/>
            <person name="Ishida S."/>
            <person name="Ono Y."/>
            <person name="Takiguchi S."/>
            <person name="Watanabe S."/>
            <person name="Yosida M."/>
            <person name="Hotuta T."/>
            <person name="Kusano J."/>
            <person name="Kanehori K."/>
            <person name="Takahashi-Fujii A."/>
            <person name="Hara H."/>
            <person name="Tanase T.-O."/>
            <person name="Nomura Y."/>
            <person name="Togiya S."/>
            <person name="Komai F."/>
            <person name="Hara R."/>
            <person name="Takeuchi K."/>
            <person name="Arita M."/>
            <person name="Imose N."/>
            <person name="Musashino K."/>
            <person name="Yuuki H."/>
            <person name="Oshima A."/>
            <person name="Sasaki N."/>
            <person name="Aotsuka S."/>
            <person name="Yoshikawa Y."/>
            <person name="Matsunawa H."/>
            <person name="Ichihara T."/>
            <person name="Shiohata N."/>
            <person name="Sano S."/>
            <person name="Moriya S."/>
            <person name="Momiyama H."/>
            <person name="Satoh N."/>
            <person name="Takami S."/>
            <person name="Terashima Y."/>
            <person name="Suzuki O."/>
            <person name="Nakagawa S."/>
            <person name="Senoh A."/>
            <person name="Mizoguchi H."/>
            <person name="Goto Y."/>
            <person name="Shimizu F."/>
            <person name="Wakebe H."/>
            <person name="Hishigaki H."/>
            <person name="Watanabe T."/>
            <person name="Sugiyama A."/>
            <person name="Takemoto M."/>
            <person name="Kawakami B."/>
            <person name="Yamazaki M."/>
            <person name="Watanabe K."/>
            <person name="Kumagai A."/>
            <person name="Itakura S."/>
            <person name="Fukuzumi Y."/>
            <person name="Fujimori Y."/>
            <person name="Komiyama M."/>
            <person name="Tashiro H."/>
            <person name="Tanigami A."/>
            <person name="Fujiwara T."/>
            <person name="Ono T."/>
            <person name="Yamada K."/>
            <person name="Fujii Y."/>
            <person name="Ozaki K."/>
            <person name="Hirao M."/>
            <person name="Ohmori Y."/>
            <person name="Kawabata A."/>
            <person name="Hikiji T."/>
            <person name="Kobatake N."/>
            <person name="Inagaki H."/>
            <person name="Ikema Y."/>
            <person name="Okamoto S."/>
            <person name="Okitani R."/>
            <person name="Kawakami T."/>
            <person name="Noguchi S."/>
            <person name="Itoh T."/>
            <person name="Shigeta K."/>
            <person name="Senba T."/>
            <person name="Matsumura K."/>
            <person name="Nakajima Y."/>
            <person name="Mizuno T."/>
            <person name="Morinaga M."/>
            <person name="Sasaki M."/>
            <person name="Togashi T."/>
            <person name="Oyama M."/>
            <person name="Hata H."/>
            <person name="Watanabe M."/>
            <person name="Komatsu T."/>
            <person name="Mizushima-Sugano J."/>
            <person name="Satoh T."/>
            <person name="Shirai Y."/>
            <person name="Takahashi Y."/>
            <person name="Nakagawa K."/>
            <person name="Okumura K."/>
            <person name="Nagase T."/>
            <person name="Nomura N."/>
            <person name="Kikuchi H."/>
            <person name="Masuho Y."/>
            <person name="Yamashita R."/>
            <person name="Nakai K."/>
            <person name="Yada T."/>
            <person name="Nakamura Y."/>
            <person name="Ohara O."/>
            <person name="Isogai T."/>
            <person name="Sugano S."/>
        </authorList>
    </citation>
    <scope>NUCLEOTIDE SEQUENCE [LARGE SCALE MRNA] (ISOFORM SKNAC-2)</scope>
    <scope>VARIANTS GLU-336; SER-405; SER-519; THR-1795 AND PRO-1841</scope>
    <source>
        <tissue>Pericardium</tissue>
    </source>
</reference>
<reference key="2">
    <citation type="journal article" date="2006" name="Nature">
        <title>The finished DNA sequence of human chromosome 12.</title>
        <authorList>
            <person name="Scherer S.E."/>
            <person name="Muzny D.M."/>
            <person name="Buhay C.J."/>
            <person name="Chen R."/>
            <person name="Cree A."/>
            <person name="Ding Y."/>
            <person name="Dugan-Rocha S."/>
            <person name="Gill R."/>
            <person name="Gunaratne P."/>
            <person name="Harris R.A."/>
            <person name="Hawes A.C."/>
            <person name="Hernandez J."/>
            <person name="Hodgson A.V."/>
            <person name="Hume J."/>
            <person name="Jackson A."/>
            <person name="Khan Z.M."/>
            <person name="Kovar-Smith C."/>
            <person name="Lewis L.R."/>
            <person name="Lozado R.J."/>
            <person name="Metzker M.L."/>
            <person name="Milosavljevic A."/>
            <person name="Miner G.R."/>
            <person name="Montgomery K.T."/>
            <person name="Morgan M.B."/>
            <person name="Nazareth L.V."/>
            <person name="Scott G."/>
            <person name="Sodergren E."/>
            <person name="Song X.-Z."/>
            <person name="Steffen D."/>
            <person name="Lovering R.C."/>
            <person name="Wheeler D.A."/>
            <person name="Worley K.C."/>
            <person name="Yuan Y."/>
            <person name="Zhang Z."/>
            <person name="Adams C.Q."/>
            <person name="Ansari-Lari M.A."/>
            <person name="Ayele M."/>
            <person name="Brown M.J."/>
            <person name="Chen G."/>
            <person name="Chen Z."/>
            <person name="Clerc-Blankenburg K.P."/>
            <person name="Davis C."/>
            <person name="Delgado O."/>
            <person name="Dinh H.H."/>
            <person name="Draper H."/>
            <person name="Gonzalez-Garay M.L."/>
            <person name="Havlak P."/>
            <person name="Jackson L.R."/>
            <person name="Jacob L.S."/>
            <person name="Kelly S.H."/>
            <person name="Li L."/>
            <person name="Li Z."/>
            <person name="Liu J."/>
            <person name="Liu W."/>
            <person name="Lu J."/>
            <person name="Maheshwari M."/>
            <person name="Nguyen B.-V."/>
            <person name="Okwuonu G.O."/>
            <person name="Pasternak S."/>
            <person name="Perez L.M."/>
            <person name="Plopper F.J.H."/>
            <person name="Santibanez J."/>
            <person name="Shen H."/>
            <person name="Tabor P.E."/>
            <person name="Verduzco D."/>
            <person name="Waldron L."/>
            <person name="Wang Q."/>
            <person name="Williams G.A."/>
            <person name="Zhang J."/>
            <person name="Zhou J."/>
            <person name="Allen C.C."/>
            <person name="Amin A.G."/>
            <person name="Anyalebechi V."/>
            <person name="Bailey M."/>
            <person name="Barbaria J.A."/>
            <person name="Bimage K.E."/>
            <person name="Bryant N.P."/>
            <person name="Burch P.E."/>
            <person name="Burkett C.E."/>
            <person name="Burrell K.L."/>
            <person name="Calderon E."/>
            <person name="Cardenas V."/>
            <person name="Carter K."/>
            <person name="Casias K."/>
            <person name="Cavazos I."/>
            <person name="Cavazos S.R."/>
            <person name="Ceasar H."/>
            <person name="Chacko J."/>
            <person name="Chan S.N."/>
            <person name="Chavez D."/>
            <person name="Christopoulos C."/>
            <person name="Chu J."/>
            <person name="Cockrell R."/>
            <person name="Cox C.D."/>
            <person name="Dang M."/>
            <person name="Dathorne S.R."/>
            <person name="David R."/>
            <person name="Davis C.M."/>
            <person name="Davy-Carroll L."/>
            <person name="Deshazo D.R."/>
            <person name="Donlin J.E."/>
            <person name="D'Souza L."/>
            <person name="Eaves K.A."/>
            <person name="Egan A."/>
            <person name="Emery-Cohen A.J."/>
            <person name="Escotto M."/>
            <person name="Flagg N."/>
            <person name="Forbes L.D."/>
            <person name="Gabisi A.M."/>
            <person name="Garza M."/>
            <person name="Hamilton C."/>
            <person name="Henderson N."/>
            <person name="Hernandez O."/>
            <person name="Hines S."/>
            <person name="Hogues M.E."/>
            <person name="Huang M."/>
            <person name="Idlebird D.G."/>
            <person name="Johnson R."/>
            <person name="Jolivet A."/>
            <person name="Jones S."/>
            <person name="Kagan R."/>
            <person name="King L.M."/>
            <person name="Leal B."/>
            <person name="Lebow H."/>
            <person name="Lee S."/>
            <person name="LeVan J.M."/>
            <person name="Lewis L.C."/>
            <person name="London P."/>
            <person name="Lorensuhewa L.M."/>
            <person name="Loulseged H."/>
            <person name="Lovett D.A."/>
            <person name="Lucier A."/>
            <person name="Lucier R.L."/>
            <person name="Ma J."/>
            <person name="Madu R.C."/>
            <person name="Mapua P."/>
            <person name="Martindale A.D."/>
            <person name="Martinez E."/>
            <person name="Massey E."/>
            <person name="Mawhiney S."/>
            <person name="Meador M.G."/>
            <person name="Mendez S."/>
            <person name="Mercado C."/>
            <person name="Mercado I.C."/>
            <person name="Merritt C.E."/>
            <person name="Miner Z.L."/>
            <person name="Minja E."/>
            <person name="Mitchell T."/>
            <person name="Mohabbat F."/>
            <person name="Mohabbat K."/>
            <person name="Montgomery B."/>
            <person name="Moore N."/>
            <person name="Morris S."/>
            <person name="Munidasa M."/>
            <person name="Ngo R.N."/>
            <person name="Nguyen N.B."/>
            <person name="Nickerson E."/>
            <person name="Nwaokelemeh O.O."/>
            <person name="Nwokenkwo S."/>
            <person name="Obregon M."/>
            <person name="Oguh M."/>
            <person name="Oragunye N."/>
            <person name="Oviedo R.J."/>
            <person name="Parish B.J."/>
            <person name="Parker D.N."/>
            <person name="Parrish J."/>
            <person name="Parks K.L."/>
            <person name="Paul H.A."/>
            <person name="Payton B.A."/>
            <person name="Perez A."/>
            <person name="Perrin W."/>
            <person name="Pickens A."/>
            <person name="Primus E.L."/>
            <person name="Pu L.-L."/>
            <person name="Puazo M."/>
            <person name="Quiles M.M."/>
            <person name="Quiroz J.B."/>
            <person name="Rabata D."/>
            <person name="Reeves K."/>
            <person name="Ruiz S.J."/>
            <person name="Shao H."/>
            <person name="Sisson I."/>
            <person name="Sonaike T."/>
            <person name="Sorelle R.P."/>
            <person name="Sutton A.E."/>
            <person name="Svatek A.F."/>
            <person name="Svetz L.A."/>
            <person name="Tamerisa K.S."/>
            <person name="Taylor T.R."/>
            <person name="Teague B."/>
            <person name="Thomas N."/>
            <person name="Thorn R.D."/>
            <person name="Trejos Z.Y."/>
            <person name="Trevino B.K."/>
            <person name="Ukegbu O.N."/>
            <person name="Urban J.B."/>
            <person name="Vasquez L.I."/>
            <person name="Vera V.A."/>
            <person name="Villasana D.M."/>
            <person name="Wang L."/>
            <person name="Ward-Moore S."/>
            <person name="Warren J.T."/>
            <person name="Wei X."/>
            <person name="White F."/>
            <person name="Williamson A.L."/>
            <person name="Wleczyk R."/>
            <person name="Wooden H.S."/>
            <person name="Wooden S.H."/>
            <person name="Yen J."/>
            <person name="Yoon L."/>
            <person name="Yoon V."/>
            <person name="Zorrilla S.E."/>
            <person name="Nelson D."/>
            <person name="Kucherlapati R."/>
            <person name="Weinstock G."/>
            <person name="Gibbs R.A."/>
        </authorList>
    </citation>
    <scope>NUCLEOTIDE SEQUENCE [LARGE SCALE GENOMIC DNA]</scope>
</reference>
<reference key="3">
    <citation type="journal article" date="2009" name="FASEB J.">
        <title>skNAC (skeletal Naca), a muscle-specific isoform of Naca (nascent polypeptide-associated complex alpha), is required for myofibril organization.</title>
        <authorList>
            <person name="Li H."/>
            <person name="Randall W.R."/>
            <person name="Du S.J."/>
        </authorList>
    </citation>
    <scope>IDENTIFICATION</scope>
    <scope>REPEATS</scope>
    <scope>ALTERNATIVE SPLICING</scope>
</reference>
<reference key="4">
    <citation type="journal article" date="2006" name="Cell">
        <title>Global, in vivo, and site-specific phosphorylation dynamics in signaling networks.</title>
        <authorList>
            <person name="Olsen J.V."/>
            <person name="Blagoev B."/>
            <person name="Gnad F."/>
            <person name="Macek B."/>
            <person name="Kumar C."/>
            <person name="Mortensen P."/>
            <person name="Mann M."/>
        </authorList>
    </citation>
    <scope>IDENTIFICATION BY MASS SPECTROMETRY [LARGE SCALE ANALYSIS]</scope>
    <source>
        <tissue>Cervix carcinoma</tissue>
    </source>
</reference>
<reference key="5">
    <citation type="journal article" date="2007" name="Science">
        <title>ATM and ATR substrate analysis reveals extensive protein networks responsive to DNA damage.</title>
        <authorList>
            <person name="Matsuoka S."/>
            <person name="Ballif B.A."/>
            <person name="Smogorzewska A."/>
            <person name="McDonald E.R. III"/>
            <person name="Hurov K.E."/>
            <person name="Luo J."/>
            <person name="Bakalarski C.E."/>
            <person name="Zhao Z."/>
            <person name="Solimini N."/>
            <person name="Lerenthal Y."/>
            <person name="Shiloh Y."/>
            <person name="Gygi S.P."/>
            <person name="Elledge S.J."/>
        </authorList>
    </citation>
    <scope>PHOSPHORYLATION [LARGE SCALE ANALYSIS] AT SER-2049</scope>
    <scope>IDENTIFICATION BY MASS SPECTROMETRY [LARGE SCALE ANALYSIS]</scope>
    <source>
        <tissue>Embryonic kidney</tissue>
    </source>
</reference>
<reference key="6">
    <citation type="journal article" date="2008" name="Mol. Cell">
        <title>Kinase-selective enrichment enables quantitative phosphoproteomics of the kinome across the cell cycle.</title>
        <authorList>
            <person name="Daub H."/>
            <person name="Olsen J.V."/>
            <person name="Bairlein M."/>
            <person name="Gnad F."/>
            <person name="Oppermann F.S."/>
            <person name="Korner R."/>
            <person name="Greff Z."/>
            <person name="Keri G."/>
            <person name="Stemmann O."/>
            <person name="Mann M."/>
        </authorList>
    </citation>
    <scope>PHOSPHORYLATION [LARGE SCALE ANALYSIS] AT SER-2029</scope>
    <scope>IDENTIFICATION BY MASS SPECTROMETRY [LARGE SCALE ANALYSIS]</scope>
    <source>
        <tissue>Cervix carcinoma</tissue>
    </source>
</reference>
<reference key="7">
    <citation type="journal article" date="2008" name="Proc. Natl. Acad. Sci. U.S.A.">
        <title>A quantitative atlas of mitotic phosphorylation.</title>
        <authorList>
            <person name="Dephoure N."/>
            <person name="Zhou C."/>
            <person name="Villen J."/>
            <person name="Beausoleil S.A."/>
            <person name="Bakalarski C.E."/>
            <person name="Elledge S.J."/>
            <person name="Gygi S.P."/>
        </authorList>
    </citation>
    <scope>PHOSPHORYLATION [LARGE SCALE ANALYSIS] AT THR-2024; SER-2029 AND SER-2054</scope>
    <scope>IDENTIFICATION BY MASS SPECTROMETRY [LARGE SCALE ANALYSIS]</scope>
    <source>
        <tissue>Cervix carcinoma</tissue>
    </source>
</reference>
<reference key="8">
    <citation type="journal article" date="2009" name="Anal. Chem.">
        <title>Lys-N and trypsin cover complementary parts of the phosphoproteome in a refined SCX-based approach.</title>
        <authorList>
            <person name="Gauci S."/>
            <person name="Helbig A.O."/>
            <person name="Slijper M."/>
            <person name="Krijgsveld J."/>
            <person name="Heck A.J."/>
            <person name="Mohammed S."/>
        </authorList>
    </citation>
    <scope>IDENTIFICATION BY MASS SPECTROMETRY [LARGE SCALE ANALYSIS]</scope>
</reference>
<reference key="9">
    <citation type="journal article" date="2009" name="Sci. Signal.">
        <title>Quantitative phosphoproteomic analysis of T cell receptor signaling reveals system-wide modulation of protein-protein interactions.</title>
        <authorList>
            <person name="Mayya V."/>
            <person name="Lundgren D.H."/>
            <person name="Hwang S.-I."/>
            <person name="Rezaul K."/>
            <person name="Wu L."/>
            <person name="Eng J.K."/>
            <person name="Rodionov V."/>
            <person name="Han D.K."/>
        </authorList>
    </citation>
    <scope>PHOSPHORYLATION [LARGE SCALE ANALYSIS] AT SER-2029</scope>
    <scope>IDENTIFICATION BY MASS SPECTROMETRY [LARGE SCALE ANALYSIS]</scope>
    <source>
        <tissue>Leukemic T-cell</tissue>
    </source>
</reference>
<reference key="10">
    <citation type="journal article" date="2009" name="Science">
        <title>Lysine acetylation targets protein complexes and co-regulates major cellular functions.</title>
        <authorList>
            <person name="Choudhary C."/>
            <person name="Kumar C."/>
            <person name="Gnad F."/>
            <person name="Nielsen M.L."/>
            <person name="Rehman M."/>
            <person name="Walther T.C."/>
            <person name="Olsen J.V."/>
            <person name="Mann M."/>
        </authorList>
    </citation>
    <scope>ACETYLATION [LARGE SCALE ANALYSIS] AT LYS-2005</scope>
    <scope>IDENTIFICATION BY MASS SPECTROMETRY [LARGE SCALE ANALYSIS]</scope>
</reference>
<reference key="11">
    <citation type="journal article" date="2010" name="Sci. Signal.">
        <title>Quantitative phosphoproteomics reveals widespread full phosphorylation site occupancy during mitosis.</title>
        <authorList>
            <person name="Olsen J.V."/>
            <person name="Vermeulen M."/>
            <person name="Santamaria A."/>
            <person name="Kumar C."/>
            <person name="Miller M.L."/>
            <person name="Jensen L.J."/>
            <person name="Gnad F."/>
            <person name="Cox J."/>
            <person name="Jensen T.S."/>
            <person name="Nigg E.A."/>
            <person name="Brunak S."/>
            <person name="Mann M."/>
        </authorList>
    </citation>
    <scope>PHOSPHORYLATION [LARGE SCALE ANALYSIS] AT SER-2049; SER-2054 AND SER-2066</scope>
    <scope>IDENTIFICATION BY MASS SPECTROMETRY [LARGE SCALE ANALYSIS]</scope>
    <source>
        <tissue>Cervix carcinoma</tissue>
    </source>
</reference>
<reference key="12">
    <citation type="journal article" date="2011" name="BMC Syst. Biol.">
        <title>Initial characterization of the human central proteome.</title>
        <authorList>
            <person name="Burkard T.R."/>
            <person name="Planyavsky M."/>
            <person name="Kaupe I."/>
            <person name="Breitwieser F.P."/>
            <person name="Buerckstuemmer T."/>
            <person name="Bennett K.L."/>
            <person name="Superti-Furga G."/>
            <person name="Colinge J."/>
        </authorList>
    </citation>
    <scope>IDENTIFICATION BY MASS SPECTROMETRY [LARGE SCALE ANALYSIS]</scope>
</reference>
<reference key="13">
    <citation type="journal article" date="2011" name="Sci. Signal.">
        <title>System-wide temporal characterization of the proteome and phosphoproteome of human embryonic stem cell differentiation.</title>
        <authorList>
            <person name="Rigbolt K.T."/>
            <person name="Prokhorova T.A."/>
            <person name="Akimov V."/>
            <person name="Henningsen J."/>
            <person name="Johansen P.T."/>
            <person name="Kratchmarova I."/>
            <person name="Kassem M."/>
            <person name="Mann M."/>
            <person name="Olsen J.V."/>
            <person name="Blagoev B."/>
        </authorList>
    </citation>
    <scope>PHOSPHORYLATION [LARGE SCALE ANALYSIS] AT SER-2029</scope>
    <scope>IDENTIFICATION BY MASS SPECTROMETRY [LARGE SCALE ANALYSIS]</scope>
</reference>
<reference key="14">
    <citation type="journal article" date="2013" name="J. Proteome Res.">
        <title>Toward a comprehensive characterization of a human cancer cell phosphoproteome.</title>
        <authorList>
            <person name="Zhou H."/>
            <person name="Di Palma S."/>
            <person name="Preisinger C."/>
            <person name="Peng M."/>
            <person name="Polat A.N."/>
            <person name="Heck A.J."/>
            <person name="Mohammed S."/>
        </authorList>
    </citation>
    <scope>PHOSPHORYLATION [LARGE SCALE ANALYSIS] AT SER-1995</scope>
    <scope>IDENTIFICATION BY MASS SPECTROMETRY [LARGE SCALE ANALYSIS]</scope>
    <source>
        <tissue>Erythroleukemia</tissue>
    </source>
</reference>
<reference key="15">
    <citation type="journal article" date="2014" name="J. Proteomics">
        <title>An enzyme assisted RP-RPLC approach for in-depth analysis of human liver phosphoproteome.</title>
        <authorList>
            <person name="Bian Y."/>
            <person name="Song C."/>
            <person name="Cheng K."/>
            <person name="Dong M."/>
            <person name="Wang F."/>
            <person name="Huang J."/>
            <person name="Sun D."/>
            <person name="Wang L."/>
            <person name="Ye M."/>
            <person name="Zou H."/>
        </authorList>
    </citation>
    <scope>IDENTIFICATION BY MASS SPECTROMETRY [LARGE SCALE ANALYSIS]</scope>
    <source>
        <tissue>Liver</tissue>
    </source>
</reference>
<reference key="16">
    <citation type="journal article" date="2015" name="Proteomics">
        <title>N-terminome analysis of the human mitochondrial proteome.</title>
        <authorList>
            <person name="Vaca Jacome A.S."/>
            <person name="Rabilloud T."/>
            <person name="Schaeffer-Reiss C."/>
            <person name="Rompais M."/>
            <person name="Ayoub D."/>
            <person name="Lane L."/>
            <person name="Bairoch A."/>
            <person name="Van Dorsselaer A."/>
            <person name="Carapito C."/>
        </authorList>
    </citation>
    <scope>IDENTIFICATION BY MASS SPECTROMETRY [LARGE SCALE ANALYSIS]</scope>
</reference>
<reference key="17">
    <citation type="journal article" date="2017" name="Nat. Struct. Mol. Biol.">
        <title>Site-specific mapping of the human SUMO proteome reveals co-modification with phosphorylation.</title>
        <authorList>
            <person name="Hendriks I.A."/>
            <person name="Lyon D."/>
            <person name="Young C."/>
            <person name="Jensen L.J."/>
            <person name="Vertegaal A.C."/>
            <person name="Nielsen M.L."/>
        </authorList>
    </citation>
    <scope>SUMOYLATION [LARGE SCALE ANALYSIS] AT LYS-2005</scope>
    <scope>IDENTIFICATION BY MASS SPECTROMETRY [LARGE SCALE ANALYSIS]</scope>
</reference>
<sequence length="2078" mass="205422">MPGEATETVPATEQELPQPQAETAVLPMSSALSVTAALGQPGPTLPPPCSPAPQQCPLSAANQASPFPSPSTIASTPLEVPFPQSSSGTALPLGTAPEAPTFLPNLIGPPISPAALALASPMIAPTLKGTPSSSAPLALVALAPHSVQKSSAFPPNLLTSPPSVAVAESGSVITLSAPIAPSEPKTNLNKVPSEVVPNPKGTPSPPCIVSTVPYHCVTPMASIQSGVASLPQTTPTTTLAIASPQVKDTTISSVLISPQNPGSLSLKGPVSPPAALSLSTQSLPVVTSSQKTAGPNTPPDFPISLGSHLAPLHQSSFGSVQLLGQTGPSALSDPTVKTISVDHSSTGASYPSQRSVIPPLPSRNEVVPATVAAFPVVAPSVDKGPSTISSITCSPSGSLNVATSFSLSPTTSLILKSSPNATYHYPLVAQMPVSSVGTTPLVVTNPCTIAAAPTTTFEVATCVSPPMSSGPISNIEPTSPAALVMAPVAPKEPSTQVATTLRIPVSPPLPDPEDLKNLPSSVLVKFPTQKDLQTVPASLEGAPFSPAQAGLTTKKDPTVLPLVQAAPKNSPSFQSTSSSPEIPLSPEATLAKKSLGEPLPIGKPASSMTSPLGVNSSASVIKTDSYAGPDSAGPLLKSSLITPTVAAFPLESADPAGVAPTTAKGTSTYTTTASPFLEGTVSLAPKNHPVKEGTLTTLPLVPTASENCPVAPSPQNTCAPLATLVLAPEIPKSVPSPSLPPAGTPPGTKKVDGISHTSALAPVASSPKECPTEDSGASATASSKGTLTYLADSPSPLGVSVSPQTKRPPTKKGSAGPDTPIGNLSSPVSPVEASFLPENSLSFQGSKDSPATTHSPTPPSPKGAPTPSAVTPLSPKGVTLPPKETPTPSVVNLPFPKEGPATPAPKQAPALSMTSSSPKKARATPAPKGIPASPSPKGAPTPPAATPPSPKGGPATPSPKWAPTPPAATPPSPKGGPATPSPKGAPTPPAATPPSPKGGPATPSPKGAPTPPAVTPPSPKGSPAATPFPKGASTPPAATPPSPKGSPAATPLPKGAPTTPAATLPSPKGGPATPSLKGAPTPPAATPPSPKGGPATPSPKGAPMPPAATPPSPKGGLATPPHKGAPTTPAATPPSPKGGLATPPPKGAPTTPAATPPSPKGGLATPPPKGAPTTPAATPPSPKGGLATPSPKGAPTTPAATPPSPKGGLATPSPKGAPTTPAATPPSPKGGLATPSPKGAPTTPAATPPSPKGGPATPPPKGAPTPPAATPPSLKGGLATPPHKGAPNPAVVTPPSPKGGPATSPPKGAPTPPAATPPSPKGSPGTPPPKGAPTPPAVTPPSPKGTPTLPATTPSSKGGPTTPSSKEGPTPPAATPSHKGGPAMTPPSPKRGPAIPSPKGDPTSPAVIPLSPKKAPATPVTREGAATPSKGDLTPPAVTPVSLKKAPATSAPKGGPATPSSKGDPTLPAVTPPSPKEPPAPKQVATSSSPKKAPATPAPMGAPTLPAVIPSSPKEVPATPSSRRDPIAPTATLLSKKTPATLAPKEALIPPAMTVPSPKKTPAIPTPKEAPATPSSKEASSPPAVTPSTYKGAPSPKELLIPPAVTSPSPKEAPTPPAVTPPSPEKGPATPAPKGTPTSPPVTPSSLKDSPTSPASVTCKMGATVPQASKGLPAKKGPTALKEVLVAPAPESTPIITAPTRKGPQTKKSSATSPPICPDPSAKNGSKGPLSTVAPAPLLPVQKDSSKTAKGKDASHSPKGPLAPPESKASTPLTAAAFEKVLPKPESASVSAAPSPPVSLPLAPSPVPTLPPKQQFLPSSPGLVLESPSKPLAPADEDELLPLIPPEPISGGVPFQSVLVNMPTPKSAGIPVPTPSAKQPVTKNNKGSGTESDSDESVPELEEQDSTQATTQQAQLAAAAEIDEEPVSKAKQSRSEKKARKAMSKLGLRQVTGVTRVTIRKSKNILFVITKPDVYKSPASDTYIVFGEAKIEDLSQQAQLAAAEKFKVQGEAVSNIQENTQTPTVQEESEEEEVDETGVEVKDIELVMSQANVSRAKAVRALKNNSNDIVNAIMELTM</sequence>
<accession>E9PAV3</accession>
<name>NACAM_HUMAN</name>